<keyword id="KW-1185">Reference proteome</keyword>
<feature type="chain" id="PRO_0000138479" description="UPF0145 protein PM1668">
    <location>
        <begin position="1"/>
        <end position="107"/>
    </location>
</feature>
<accession>Q9CKF3</accession>
<organism>
    <name type="scientific">Pasteurella multocida (strain Pm70)</name>
    <dbReference type="NCBI Taxonomy" id="272843"/>
    <lineage>
        <taxon>Bacteria</taxon>
        <taxon>Pseudomonadati</taxon>
        <taxon>Pseudomonadota</taxon>
        <taxon>Gammaproteobacteria</taxon>
        <taxon>Pasteurellales</taxon>
        <taxon>Pasteurellaceae</taxon>
        <taxon>Pasteurella</taxon>
    </lineage>
</organism>
<comment type="similarity">
    <text evidence="1">Belongs to the UPF0145 family.</text>
</comment>
<dbReference type="EMBL" id="AE004439">
    <property type="protein sequence ID" value="AAK03752.1"/>
    <property type="molecule type" value="Genomic_DNA"/>
</dbReference>
<dbReference type="RefSeq" id="WP_005718569.1">
    <property type="nucleotide sequence ID" value="NC_002663.1"/>
</dbReference>
<dbReference type="SMR" id="Q9CKF3"/>
<dbReference type="STRING" id="272843.PM1668"/>
<dbReference type="EnsemblBacteria" id="AAK03752">
    <property type="protein sequence ID" value="AAK03752"/>
    <property type="gene ID" value="PM1668"/>
</dbReference>
<dbReference type="KEGG" id="pmu:PM1668"/>
<dbReference type="HOGENOM" id="CLU_117144_3_2_6"/>
<dbReference type="OrthoDB" id="9796448at2"/>
<dbReference type="Proteomes" id="UP000000809">
    <property type="component" value="Chromosome"/>
</dbReference>
<dbReference type="Gene3D" id="3.30.110.70">
    <property type="entry name" value="Hypothetical protein apc22750. Chain B"/>
    <property type="match status" value="1"/>
</dbReference>
<dbReference type="HAMAP" id="MF_00338">
    <property type="entry name" value="UPF0145"/>
    <property type="match status" value="1"/>
</dbReference>
<dbReference type="InterPro" id="IPR035439">
    <property type="entry name" value="UPF0145_dom_sf"/>
</dbReference>
<dbReference type="InterPro" id="IPR002765">
    <property type="entry name" value="UPF0145_YbjQ-like"/>
</dbReference>
<dbReference type="PANTHER" id="PTHR34068">
    <property type="entry name" value="UPF0145 PROTEIN YBJQ"/>
    <property type="match status" value="1"/>
</dbReference>
<dbReference type="PANTHER" id="PTHR34068:SF1">
    <property type="entry name" value="UPF0145 PROTEIN YBJQ"/>
    <property type="match status" value="1"/>
</dbReference>
<dbReference type="Pfam" id="PF01906">
    <property type="entry name" value="YbjQ_1"/>
    <property type="match status" value="1"/>
</dbReference>
<dbReference type="SUPFAM" id="SSF117782">
    <property type="entry name" value="YbjQ-like"/>
    <property type="match status" value="1"/>
</dbReference>
<reference key="1">
    <citation type="journal article" date="2001" name="Proc. Natl. Acad. Sci. U.S.A.">
        <title>Complete genomic sequence of Pasteurella multocida Pm70.</title>
        <authorList>
            <person name="May B.J."/>
            <person name="Zhang Q."/>
            <person name="Li L.L."/>
            <person name="Paustian M.L."/>
            <person name="Whittam T.S."/>
            <person name="Kapur V."/>
        </authorList>
    </citation>
    <scope>NUCLEOTIDE SEQUENCE [LARGE SCALE GENOMIC DNA]</scope>
    <source>
        <strain>Pm70</strain>
    </source>
</reference>
<evidence type="ECO:0000305" key="1"/>
<sequence length="107" mass="11500">MLITTTPSIEGKQIIEYKEVVFGEVVAGSNFIRDFFAGITDIIGGRSGAYESKIARARKEALEELQQQAKRLGANAVVGVEVNYTSINGEGKSMFMIVASGTAVVVR</sequence>
<name>Y1668_PASMU</name>
<gene>
    <name type="ordered locus">PM1668</name>
</gene>
<protein>
    <recommendedName>
        <fullName>UPF0145 protein PM1668</fullName>
    </recommendedName>
</protein>
<proteinExistence type="inferred from homology"/>